<organism>
    <name type="scientific">Protochlamydia amoebophila (strain UWE25)</name>
    <dbReference type="NCBI Taxonomy" id="264201"/>
    <lineage>
        <taxon>Bacteria</taxon>
        <taxon>Pseudomonadati</taxon>
        <taxon>Chlamydiota</taxon>
        <taxon>Chlamydiia</taxon>
        <taxon>Parachlamydiales</taxon>
        <taxon>Parachlamydiaceae</taxon>
        <taxon>Candidatus Protochlamydia</taxon>
    </lineage>
</organism>
<comment type="function">
    <text evidence="1">Catalyzes the methylthiolation of an aspartic acid residue of ribosomal protein uS12.</text>
</comment>
<comment type="catalytic activity">
    <reaction evidence="1">
        <text>L-aspartate(89)-[ribosomal protein uS12]-hydrogen + (sulfur carrier)-SH + AH2 + 2 S-adenosyl-L-methionine = 3-methylsulfanyl-L-aspartate(89)-[ribosomal protein uS12]-hydrogen + (sulfur carrier)-H + 5'-deoxyadenosine + L-methionine + A + S-adenosyl-L-homocysteine + 2 H(+)</text>
        <dbReference type="Rhea" id="RHEA:37087"/>
        <dbReference type="Rhea" id="RHEA-COMP:10460"/>
        <dbReference type="Rhea" id="RHEA-COMP:10461"/>
        <dbReference type="Rhea" id="RHEA-COMP:14737"/>
        <dbReference type="Rhea" id="RHEA-COMP:14739"/>
        <dbReference type="ChEBI" id="CHEBI:13193"/>
        <dbReference type="ChEBI" id="CHEBI:15378"/>
        <dbReference type="ChEBI" id="CHEBI:17319"/>
        <dbReference type="ChEBI" id="CHEBI:17499"/>
        <dbReference type="ChEBI" id="CHEBI:29917"/>
        <dbReference type="ChEBI" id="CHEBI:29961"/>
        <dbReference type="ChEBI" id="CHEBI:57844"/>
        <dbReference type="ChEBI" id="CHEBI:57856"/>
        <dbReference type="ChEBI" id="CHEBI:59789"/>
        <dbReference type="ChEBI" id="CHEBI:64428"/>
        <dbReference type="ChEBI" id="CHEBI:73599"/>
        <dbReference type="EC" id="2.8.4.4"/>
    </reaction>
</comment>
<comment type="cofactor">
    <cofactor evidence="1">
        <name>[4Fe-4S] cluster</name>
        <dbReference type="ChEBI" id="CHEBI:49883"/>
    </cofactor>
    <text evidence="1">Binds 2 [4Fe-4S] clusters. One cluster is coordinated with 3 cysteines and an exchangeable S-adenosyl-L-methionine.</text>
</comment>
<comment type="subcellular location">
    <subcellularLocation>
        <location evidence="1">Cytoplasm</location>
    </subcellularLocation>
</comment>
<comment type="similarity">
    <text evidence="1">Belongs to the methylthiotransferase family. RimO subfamily.</text>
</comment>
<name>RIMO_PARUW</name>
<protein>
    <recommendedName>
        <fullName evidence="1">Ribosomal protein uS12 methylthiotransferase RimO</fullName>
        <shortName evidence="1">uS12 MTTase</shortName>
        <shortName evidence="1">uS12 methylthiotransferase</shortName>
        <ecNumber evidence="1">2.8.4.4</ecNumber>
    </recommendedName>
    <alternativeName>
        <fullName evidence="1">Ribosomal protein uS12 (aspartate-C(3))-methylthiotransferase</fullName>
    </alternativeName>
    <alternativeName>
        <fullName evidence="1">Ribosome maturation factor RimO</fullName>
    </alternativeName>
</protein>
<gene>
    <name evidence="1" type="primary">rimO</name>
    <name type="ordered locus">pc1226</name>
</gene>
<evidence type="ECO:0000255" key="1">
    <source>
        <dbReference type="HAMAP-Rule" id="MF_01865"/>
    </source>
</evidence>
<evidence type="ECO:0000255" key="2">
    <source>
        <dbReference type="PROSITE-ProRule" id="PRU01266"/>
    </source>
</evidence>
<proteinExistence type="inferred from homology"/>
<sequence length="475" mass="53462">MLPILKNQGVKKDQNHIALKNDSCESSSPCFDHEGNKINFISLGCPRNLVDSEVMLGILLKAGYEVAPTLEEADYLVINTCGFLEASRQESMDTVEEVLSQRKKTAKLIVTGCMVQTHSDALKTTFPSIDYLLGSGDVEGILKAVQSTQKGQIISSARSYLEAGEVPRRLSTPKHYAYLKIAEGCRKRCAYCVIPTIKGPLKSKGKEQILKEFNLLLSQGVKEVILIAQDLGDYGKDQGAKKLTALLNLLQSMLEIKQAFWLRLLYLYPDEITDELIALMKSDSRICPYLDMPIQHVNNQILKSMRRATSKEDIIEIITKLRREIPNVAIRTSLIVGFPGETEEQFQELIQFVQDYPLENVGIFKFSREPGSHAYDLPNQISDEMKEDRYHRLMQVQKKVVKKNLKKMIGKKIAVVVEGYHPETELLMIGRHTGQCPDIDGQVLINDGRKVKAFGEIYTVEITDVADYDLVGHVI</sequence>
<reference key="1">
    <citation type="journal article" date="2004" name="Science">
        <title>Illuminating the evolutionary history of chlamydiae.</title>
        <authorList>
            <person name="Horn M."/>
            <person name="Collingro A."/>
            <person name="Schmitz-Esser S."/>
            <person name="Beier C.L."/>
            <person name="Purkhold U."/>
            <person name="Fartmann B."/>
            <person name="Brandt P."/>
            <person name="Nyakatura G.J."/>
            <person name="Droege M."/>
            <person name="Frishman D."/>
            <person name="Rattei T."/>
            <person name="Mewes H.-W."/>
            <person name="Wagner M."/>
        </authorList>
    </citation>
    <scope>NUCLEOTIDE SEQUENCE [LARGE SCALE GENOMIC DNA]</scope>
    <source>
        <strain>UWE25</strain>
    </source>
</reference>
<dbReference type="EC" id="2.8.4.4" evidence="1"/>
<dbReference type="EMBL" id="BX908798">
    <property type="protein sequence ID" value="CAF23950.1"/>
    <property type="molecule type" value="Genomic_DNA"/>
</dbReference>
<dbReference type="RefSeq" id="WP_011175776.1">
    <property type="nucleotide sequence ID" value="NC_005861.2"/>
</dbReference>
<dbReference type="SMR" id="Q6MBU9"/>
<dbReference type="STRING" id="264201.pc1226"/>
<dbReference type="eggNOG" id="COG0621">
    <property type="taxonomic scope" value="Bacteria"/>
</dbReference>
<dbReference type="HOGENOM" id="CLU_018697_0_0_0"/>
<dbReference type="Proteomes" id="UP000000529">
    <property type="component" value="Chromosome"/>
</dbReference>
<dbReference type="GO" id="GO:0005829">
    <property type="term" value="C:cytosol"/>
    <property type="evidence" value="ECO:0007669"/>
    <property type="project" value="TreeGrafter"/>
</dbReference>
<dbReference type="GO" id="GO:0051539">
    <property type="term" value="F:4 iron, 4 sulfur cluster binding"/>
    <property type="evidence" value="ECO:0007669"/>
    <property type="project" value="UniProtKB-UniRule"/>
</dbReference>
<dbReference type="GO" id="GO:0035599">
    <property type="term" value="F:aspartic acid methylthiotransferase activity"/>
    <property type="evidence" value="ECO:0007669"/>
    <property type="project" value="TreeGrafter"/>
</dbReference>
<dbReference type="GO" id="GO:0046872">
    <property type="term" value="F:metal ion binding"/>
    <property type="evidence" value="ECO:0007669"/>
    <property type="project" value="UniProtKB-KW"/>
</dbReference>
<dbReference type="GO" id="GO:0103039">
    <property type="term" value="F:protein methylthiotransferase activity"/>
    <property type="evidence" value="ECO:0007669"/>
    <property type="project" value="UniProtKB-EC"/>
</dbReference>
<dbReference type="GO" id="GO:0006400">
    <property type="term" value="P:tRNA modification"/>
    <property type="evidence" value="ECO:0007669"/>
    <property type="project" value="InterPro"/>
</dbReference>
<dbReference type="CDD" id="cd01335">
    <property type="entry name" value="Radical_SAM"/>
    <property type="match status" value="1"/>
</dbReference>
<dbReference type="FunFam" id="3.80.30.20:FF:000001">
    <property type="entry name" value="tRNA-2-methylthio-N(6)-dimethylallyladenosine synthase 2"/>
    <property type="match status" value="1"/>
</dbReference>
<dbReference type="Gene3D" id="3.40.50.12160">
    <property type="entry name" value="Methylthiotransferase, N-terminal domain"/>
    <property type="match status" value="1"/>
</dbReference>
<dbReference type="Gene3D" id="2.40.50.140">
    <property type="entry name" value="Nucleic acid-binding proteins"/>
    <property type="match status" value="1"/>
</dbReference>
<dbReference type="Gene3D" id="3.80.30.20">
    <property type="entry name" value="tm_1862 like domain"/>
    <property type="match status" value="1"/>
</dbReference>
<dbReference type="HAMAP" id="MF_01865">
    <property type="entry name" value="MTTase_RimO"/>
    <property type="match status" value="1"/>
</dbReference>
<dbReference type="InterPro" id="IPR006638">
    <property type="entry name" value="Elp3/MiaA/NifB-like_rSAM"/>
</dbReference>
<dbReference type="InterPro" id="IPR005839">
    <property type="entry name" value="Methylthiotransferase"/>
</dbReference>
<dbReference type="InterPro" id="IPR020612">
    <property type="entry name" value="Methylthiotransferase_CS"/>
</dbReference>
<dbReference type="InterPro" id="IPR013848">
    <property type="entry name" value="Methylthiotransferase_N"/>
</dbReference>
<dbReference type="InterPro" id="IPR038135">
    <property type="entry name" value="Methylthiotransferase_N_sf"/>
</dbReference>
<dbReference type="InterPro" id="IPR012340">
    <property type="entry name" value="NA-bd_OB-fold"/>
</dbReference>
<dbReference type="InterPro" id="IPR005840">
    <property type="entry name" value="Ribosomal_uS12_MeSTrfase_RimO"/>
</dbReference>
<dbReference type="InterPro" id="IPR007197">
    <property type="entry name" value="rSAM"/>
</dbReference>
<dbReference type="InterPro" id="IPR023404">
    <property type="entry name" value="rSAM_horseshoe"/>
</dbReference>
<dbReference type="InterPro" id="IPR002792">
    <property type="entry name" value="TRAM_dom"/>
</dbReference>
<dbReference type="NCBIfam" id="TIGR01125">
    <property type="entry name" value="30S ribosomal protein S12 methylthiotransferase RimO"/>
    <property type="match status" value="1"/>
</dbReference>
<dbReference type="NCBIfam" id="TIGR00089">
    <property type="entry name" value="MiaB/RimO family radical SAM methylthiotransferase"/>
    <property type="match status" value="1"/>
</dbReference>
<dbReference type="PANTHER" id="PTHR43837">
    <property type="entry name" value="RIBOSOMAL PROTEIN S12 METHYLTHIOTRANSFERASE RIMO"/>
    <property type="match status" value="1"/>
</dbReference>
<dbReference type="PANTHER" id="PTHR43837:SF1">
    <property type="entry name" value="RIBOSOMAL PROTEIN US12 METHYLTHIOTRANSFERASE RIMO"/>
    <property type="match status" value="1"/>
</dbReference>
<dbReference type="Pfam" id="PF04055">
    <property type="entry name" value="Radical_SAM"/>
    <property type="match status" value="1"/>
</dbReference>
<dbReference type="Pfam" id="PF18693">
    <property type="entry name" value="TRAM_2"/>
    <property type="match status" value="1"/>
</dbReference>
<dbReference type="Pfam" id="PF00919">
    <property type="entry name" value="UPF0004"/>
    <property type="match status" value="1"/>
</dbReference>
<dbReference type="SFLD" id="SFLDG01082">
    <property type="entry name" value="B12-binding_domain_containing"/>
    <property type="match status" value="1"/>
</dbReference>
<dbReference type="SFLD" id="SFLDS00029">
    <property type="entry name" value="Radical_SAM"/>
    <property type="match status" value="1"/>
</dbReference>
<dbReference type="SFLD" id="SFLDF00274">
    <property type="entry name" value="ribosomal_protein_S12_methylth"/>
    <property type="match status" value="1"/>
</dbReference>
<dbReference type="SMART" id="SM00729">
    <property type="entry name" value="Elp3"/>
    <property type="match status" value="1"/>
</dbReference>
<dbReference type="SUPFAM" id="SSF102114">
    <property type="entry name" value="Radical SAM enzymes"/>
    <property type="match status" value="1"/>
</dbReference>
<dbReference type="PROSITE" id="PS51449">
    <property type="entry name" value="MTTASE_N"/>
    <property type="match status" value="1"/>
</dbReference>
<dbReference type="PROSITE" id="PS01278">
    <property type="entry name" value="MTTASE_RADICAL"/>
    <property type="match status" value="1"/>
</dbReference>
<dbReference type="PROSITE" id="PS51918">
    <property type="entry name" value="RADICAL_SAM"/>
    <property type="match status" value="1"/>
</dbReference>
<dbReference type="PROSITE" id="PS50926">
    <property type="entry name" value="TRAM"/>
    <property type="match status" value="1"/>
</dbReference>
<accession>Q6MBU9</accession>
<keyword id="KW-0004">4Fe-4S</keyword>
<keyword id="KW-0963">Cytoplasm</keyword>
<keyword id="KW-0408">Iron</keyword>
<keyword id="KW-0411">Iron-sulfur</keyword>
<keyword id="KW-0479">Metal-binding</keyword>
<keyword id="KW-1185">Reference proteome</keyword>
<keyword id="KW-0949">S-adenosyl-L-methionine</keyword>
<keyword id="KW-0808">Transferase</keyword>
<feature type="chain" id="PRO_0000374939" description="Ribosomal protein uS12 methylthiotransferase RimO">
    <location>
        <begin position="1"/>
        <end position="475"/>
    </location>
</feature>
<feature type="domain" description="MTTase N-terminal" evidence="1">
    <location>
        <begin position="36"/>
        <end position="150"/>
    </location>
</feature>
<feature type="domain" description="Radical SAM core" evidence="2">
    <location>
        <begin position="171"/>
        <end position="403"/>
    </location>
</feature>
<feature type="domain" description="TRAM" evidence="1">
    <location>
        <begin position="406"/>
        <end position="475"/>
    </location>
</feature>
<feature type="binding site" evidence="1">
    <location>
        <position position="45"/>
    </location>
    <ligand>
        <name>[4Fe-4S] cluster</name>
        <dbReference type="ChEBI" id="CHEBI:49883"/>
        <label>1</label>
    </ligand>
</feature>
<feature type="binding site" evidence="1">
    <location>
        <position position="81"/>
    </location>
    <ligand>
        <name>[4Fe-4S] cluster</name>
        <dbReference type="ChEBI" id="CHEBI:49883"/>
        <label>1</label>
    </ligand>
</feature>
<feature type="binding site" evidence="1">
    <location>
        <position position="113"/>
    </location>
    <ligand>
        <name>[4Fe-4S] cluster</name>
        <dbReference type="ChEBI" id="CHEBI:49883"/>
        <label>1</label>
    </ligand>
</feature>
<feature type="binding site" evidence="1">
    <location>
        <position position="185"/>
    </location>
    <ligand>
        <name>[4Fe-4S] cluster</name>
        <dbReference type="ChEBI" id="CHEBI:49883"/>
        <label>2</label>
        <note>4Fe-4S-S-AdoMet</note>
    </ligand>
</feature>
<feature type="binding site" evidence="1">
    <location>
        <position position="189"/>
    </location>
    <ligand>
        <name>[4Fe-4S] cluster</name>
        <dbReference type="ChEBI" id="CHEBI:49883"/>
        <label>2</label>
        <note>4Fe-4S-S-AdoMet</note>
    </ligand>
</feature>
<feature type="binding site" evidence="1">
    <location>
        <position position="192"/>
    </location>
    <ligand>
        <name>[4Fe-4S] cluster</name>
        <dbReference type="ChEBI" id="CHEBI:49883"/>
        <label>2</label>
        <note>4Fe-4S-S-AdoMet</note>
    </ligand>
</feature>